<accession>Q9ZRD6</accession>
<protein>
    <recommendedName>
        <fullName evidence="6">VAMP-like protein YKT61</fullName>
        <shortName evidence="6">AtYKT61</shortName>
    </recommendedName>
    <alternativeName>
        <fullName evidence="7">Geranylgeranylated protein 1</fullName>
        <shortName evidence="7">AtGP1</shortName>
    </alternativeName>
</protein>
<organism>
    <name type="scientific">Arabidopsis thaliana</name>
    <name type="common">Mouse-ear cress</name>
    <dbReference type="NCBI Taxonomy" id="3702"/>
    <lineage>
        <taxon>Eukaryota</taxon>
        <taxon>Viridiplantae</taxon>
        <taxon>Streptophyta</taxon>
        <taxon>Embryophyta</taxon>
        <taxon>Tracheophyta</taxon>
        <taxon>Spermatophyta</taxon>
        <taxon>Magnoliopsida</taxon>
        <taxon>eudicotyledons</taxon>
        <taxon>Gunneridae</taxon>
        <taxon>Pentapetalae</taxon>
        <taxon>rosids</taxon>
        <taxon>malvids</taxon>
        <taxon>Brassicales</taxon>
        <taxon>Brassicaceae</taxon>
        <taxon>Camelineae</taxon>
        <taxon>Arabidopsis</taxon>
    </lineage>
</organism>
<reference key="1">
    <citation type="submission" date="1996-07" db="EMBL/GenBank/DDBJ databases">
        <title>A collection of cDNAs encoding isoprenylated plant proteins.</title>
        <authorList>
            <person name="Biermann B.J."/>
            <person name="Price J.R."/>
            <person name="Crowell D.N."/>
            <person name="Randall S.K."/>
        </authorList>
    </citation>
    <scope>NUCLEOTIDE SEQUENCE</scope>
</reference>
<reference key="2">
    <citation type="journal article" date="2000" name="DNA Res.">
        <title>Structural analysis of Arabidopsis thaliana chromosome 5. X. Sequence features of the regions of 3,076,755 bp covered by sixty P1 and TAC clones.</title>
        <authorList>
            <person name="Sato S."/>
            <person name="Nakamura Y."/>
            <person name="Kaneko T."/>
            <person name="Katoh T."/>
            <person name="Asamizu E."/>
            <person name="Kotani H."/>
            <person name="Tabata S."/>
        </authorList>
    </citation>
    <scope>NUCLEOTIDE SEQUENCE [LARGE SCALE GENOMIC DNA]</scope>
    <source>
        <strain>cv. Columbia</strain>
    </source>
</reference>
<reference key="3">
    <citation type="journal article" date="2017" name="Plant J.">
        <title>Araport11: a complete reannotation of the Arabidopsis thaliana reference genome.</title>
        <authorList>
            <person name="Cheng C.Y."/>
            <person name="Krishnakumar V."/>
            <person name="Chan A.P."/>
            <person name="Thibaud-Nissen F."/>
            <person name="Schobel S."/>
            <person name="Town C.D."/>
        </authorList>
    </citation>
    <scope>GENOME REANNOTATION</scope>
    <source>
        <strain>cv. Columbia</strain>
    </source>
</reference>
<reference key="4">
    <citation type="journal article" date="2003" name="Science">
        <title>Empirical analysis of transcriptional activity in the Arabidopsis genome.</title>
        <authorList>
            <person name="Yamada K."/>
            <person name="Lim J."/>
            <person name="Dale J.M."/>
            <person name="Chen H."/>
            <person name="Shinn P."/>
            <person name="Palm C.J."/>
            <person name="Southwick A.M."/>
            <person name="Wu H.C."/>
            <person name="Kim C.J."/>
            <person name="Nguyen M."/>
            <person name="Pham P.K."/>
            <person name="Cheuk R.F."/>
            <person name="Karlin-Newmann G."/>
            <person name="Liu S.X."/>
            <person name="Lam B."/>
            <person name="Sakano H."/>
            <person name="Wu T."/>
            <person name="Yu G."/>
            <person name="Miranda M."/>
            <person name="Quach H.L."/>
            <person name="Tripp M."/>
            <person name="Chang C.H."/>
            <person name="Lee J.M."/>
            <person name="Toriumi M.J."/>
            <person name="Chan M.M."/>
            <person name="Tang C.C."/>
            <person name="Onodera C.S."/>
            <person name="Deng J.M."/>
            <person name="Akiyama K."/>
            <person name="Ansari Y."/>
            <person name="Arakawa T."/>
            <person name="Banh J."/>
            <person name="Banno F."/>
            <person name="Bowser L."/>
            <person name="Brooks S.Y."/>
            <person name="Carninci P."/>
            <person name="Chao Q."/>
            <person name="Choy N."/>
            <person name="Enju A."/>
            <person name="Goldsmith A.D."/>
            <person name="Gurjal M."/>
            <person name="Hansen N.F."/>
            <person name="Hayashizaki Y."/>
            <person name="Johnson-Hopson C."/>
            <person name="Hsuan V.W."/>
            <person name="Iida K."/>
            <person name="Karnes M."/>
            <person name="Khan S."/>
            <person name="Koesema E."/>
            <person name="Ishida J."/>
            <person name="Jiang P.X."/>
            <person name="Jones T."/>
            <person name="Kawai J."/>
            <person name="Kamiya A."/>
            <person name="Meyers C."/>
            <person name="Nakajima M."/>
            <person name="Narusaka M."/>
            <person name="Seki M."/>
            <person name="Sakurai T."/>
            <person name="Satou M."/>
            <person name="Tamse R."/>
            <person name="Vaysberg M."/>
            <person name="Wallender E.K."/>
            <person name="Wong C."/>
            <person name="Yamamura Y."/>
            <person name="Yuan S."/>
            <person name="Shinozaki K."/>
            <person name="Davis R.W."/>
            <person name="Theologis A."/>
            <person name="Ecker J.R."/>
        </authorList>
    </citation>
    <scope>NUCLEOTIDE SEQUENCE [LARGE SCALE MRNA]</scope>
    <source>
        <strain>cv. Columbia</strain>
    </source>
</reference>
<reference key="5">
    <citation type="journal article" date="2004" name="Cell Struct. Funct.">
        <title>Systematic analysis of SNARE molecules in Arabidopsis: dissection of the post-Golgi network in plant cells.</title>
        <authorList>
            <person name="Uemura T."/>
            <person name="Ueda T."/>
            <person name="Ohniwa R.L."/>
            <person name="Nakano A."/>
            <person name="Takeyasu K."/>
            <person name="Sato M.H."/>
        </authorList>
    </citation>
    <scope>TISSUE SPECIFICITY</scope>
</reference>
<reference key="6">
    <citation type="journal article" date="2005" name="J. Mol. Biol.">
        <title>YKT6 is a core constituent of membrane fusion machineries at the Arabidopsis trans-Golgi network.</title>
        <authorList>
            <person name="Chen Y."/>
            <person name="Shin Y.-K."/>
            <person name="Bassham D.C."/>
        </authorList>
    </citation>
    <scope>FUNCTION</scope>
    <scope>INTERACTION WITH SYP41</scope>
    <scope>SUBUNIT</scope>
    <scope>TISSUE SPECIFICITY</scope>
</reference>
<comment type="function">
    <text evidence="1 5">May be involved in the secretory pathway (By similarity). Essential for membrane fusion mediated by either SYP41 or SYP61; triggers the fusion of phospholipid vesicles containing SYP41 or SYP61 and VTI12 (PubMed:15919093).</text>
</comment>
<comment type="subunit">
    <text evidence="5">Interacts with SYP41 (PubMed:15919093). Core constituent of the SNARE complex required for membrane fusion at the trans-Golgi network (PubMed:15919093).</text>
</comment>
<comment type="subcellular location">
    <subcellularLocation>
        <location evidence="8">Cell membrane</location>
        <topology evidence="8">Lipid-anchor</topology>
        <orientation evidence="8">Cytoplasmic side</orientation>
    </subcellularLocation>
</comment>
<comment type="alternative products">
    <event type="alternative splicing"/>
    <isoform>
        <id>Q9ZRD6-1</id>
        <name>1</name>
        <sequence type="displayed"/>
    </isoform>
    <text>A number of isoforms are produced. According to EST sequences.</text>
</comment>
<comment type="tissue specificity">
    <text evidence="4 5">Expressed ubiquitously in roots, stems, flowers and leaves.</text>
</comment>
<comment type="similarity">
    <text evidence="8">Belongs to the synaptobrevin family.</text>
</comment>
<gene>
    <name evidence="6" type="primary">YKT61</name>
    <name evidence="9" type="ordered locus">At5g58060</name>
    <name evidence="10" type="ORF">K21L19.5</name>
    <name evidence="10" type="ORF">K21L19_40</name>
</gene>
<keyword id="KW-0025">Alternative splicing</keyword>
<keyword id="KW-1003">Cell membrane</keyword>
<keyword id="KW-0449">Lipoprotein</keyword>
<keyword id="KW-0472">Membrane</keyword>
<keyword id="KW-0488">Methylation</keyword>
<keyword id="KW-0564">Palmitate</keyword>
<keyword id="KW-0636">Prenylation</keyword>
<keyword id="KW-0653">Protein transport</keyword>
<keyword id="KW-1185">Reference proteome</keyword>
<keyword id="KW-0813">Transport</keyword>
<proteinExistence type="evidence at protein level"/>
<sequence>MKITALLVLKCAPEASDPVILSNASDVSHFGYFQRSSVKEFVVFVGRTVASRTPPSQRQSVQHEEYKVHAYNRNGLCAVGFMDDHYPVRSAFSLLNQVLDEYQKSFGESWRSAKEDSNQPWPYLTEALNKFQDPAEADKLLKIQRELDETKIILHKTIDSVLARGEKLDSLVEKSSDLSMASQMFYKQAKKTNSCCTIL</sequence>
<dbReference type="EMBL" id="U64918">
    <property type="protein sequence ID" value="AAD00112.1"/>
    <property type="molecule type" value="mRNA"/>
</dbReference>
<dbReference type="EMBL" id="AB024029">
    <property type="protein sequence ID" value="BAB10997.1"/>
    <property type="molecule type" value="Genomic_DNA"/>
</dbReference>
<dbReference type="EMBL" id="CP002688">
    <property type="protein sequence ID" value="AED96992.1"/>
    <property type="molecule type" value="Genomic_DNA"/>
</dbReference>
<dbReference type="EMBL" id="AF325040">
    <property type="protein sequence ID" value="AAG40392.1"/>
    <property type="molecule type" value="mRNA"/>
</dbReference>
<dbReference type="EMBL" id="AF385703">
    <property type="protein sequence ID" value="AAK60295.1"/>
    <property type="molecule type" value="mRNA"/>
</dbReference>
<dbReference type="EMBL" id="AY133669">
    <property type="protein sequence ID" value="AAM91499.1"/>
    <property type="molecule type" value="mRNA"/>
</dbReference>
<dbReference type="RefSeq" id="NP_200614.1">
    <molecule id="Q9ZRD6-1"/>
    <property type="nucleotide sequence ID" value="NM_125191.4"/>
</dbReference>
<dbReference type="SMR" id="Q9ZRD6"/>
<dbReference type="BioGRID" id="21162">
    <property type="interactions" value="10"/>
</dbReference>
<dbReference type="FunCoup" id="Q9ZRD6">
    <property type="interactions" value="4776"/>
</dbReference>
<dbReference type="IntAct" id="Q9ZRD6">
    <property type="interactions" value="6"/>
</dbReference>
<dbReference type="STRING" id="3702.Q9ZRD6"/>
<dbReference type="iPTMnet" id="Q9ZRD6"/>
<dbReference type="ProteomicsDB" id="242336">
    <molecule id="Q9ZRD6-1"/>
</dbReference>
<dbReference type="EnsemblPlants" id="AT5G58060.1">
    <molecule id="Q9ZRD6-1"/>
    <property type="protein sequence ID" value="AT5G58060.1"/>
    <property type="gene ID" value="AT5G58060"/>
</dbReference>
<dbReference type="GeneID" id="835918"/>
<dbReference type="Gramene" id="AT5G58060.1">
    <molecule id="Q9ZRD6-1"/>
    <property type="protein sequence ID" value="AT5G58060.1"/>
    <property type="gene ID" value="AT5G58060"/>
</dbReference>
<dbReference type="KEGG" id="ath:AT5G58060"/>
<dbReference type="Araport" id="AT5G58060"/>
<dbReference type="TAIR" id="AT5G58060">
    <property type="gene designation" value="YKT61"/>
</dbReference>
<dbReference type="HOGENOM" id="CLU_074848_2_0_1"/>
<dbReference type="InParanoid" id="Q9ZRD6"/>
<dbReference type="OMA" id="HYIGIIR"/>
<dbReference type="OrthoDB" id="27923at2759"/>
<dbReference type="PhylomeDB" id="Q9ZRD6"/>
<dbReference type="PRO" id="PR:Q9ZRD6"/>
<dbReference type="Proteomes" id="UP000006548">
    <property type="component" value="Chromosome 5"/>
</dbReference>
<dbReference type="ExpressionAtlas" id="Q9ZRD6">
    <property type="expression patterns" value="baseline and differential"/>
</dbReference>
<dbReference type="GO" id="GO:0005886">
    <property type="term" value="C:plasma membrane"/>
    <property type="evidence" value="ECO:0007669"/>
    <property type="project" value="UniProtKB-SubCell"/>
</dbReference>
<dbReference type="GO" id="GO:0031201">
    <property type="term" value="C:SNARE complex"/>
    <property type="evidence" value="ECO:0000314"/>
    <property type="project" value="UniProtKB"/>
</dbReference>
<dbReference type="GO" id="GO:0015031">
    <property type="term" value="P:protein transport"/>
    <property type="evidence" value="ECO:0007669"/>
    <property type="project" value="UniProtKB-KW"/>
</dbReference>
<dbReference type="GO" id="GO:0006906">
    <property type="term" value="P:vesicle fusion"/>
    <property type="evidence" value="ECO:0000314"/>
    <property type="project" value="UniProtKB"/>
</dbReference>
<dbReference type="CDD" id="cd14824">
    <property type="entry name" value="Longin"/>
    <property type="match status" value="1"/>
</dbReference>
<dbReference type="CDD" id="cd15867">
    <property type="entry name" value="R-SNARE_YKT6"/>
    <property type="match status" value="1"/>
</dbReference>
<dbReference type="FunFam" id="1.20.5.110:FF:000020">
    <property type="entry name" value="synaptobrevin homolog YKT6"/>
    <property type="match status" value="1"/>
</dbReference>
<dbReference type="Gene3D" id="1.20.5.110">
    <property type="match status" value="1"/>
</dbReference>
<dbReference type="Gene3D" id="3.30.450.50">
    <property type="entry name" value="Longin domain"/>
    <property type="match status" value="1"/>
</dbReference>
<dbReference type="InterPro" id="IPR011012">
    <property type="entry name" value="Longin-like_dom_sf"/>
</dbReference>
<dbReference type="InterPro" id="IPR010908">
    <property type="entry name" value="Longin_dom"/>
</dbReference>
<dbReference type="InterPro" id="IPR045848">
    <property type="entry name" value="R-SNARE_YKT6"/>
</dbReference>
<dbReference type="InterPro" id="IPR001388">
    <property type="entry name" value="Synaptobrevin-like"/>
</dbReference>
<dbReference type="InterPro" id="IPR042855">
    <property type="entry name" value="V_SNARE_CC"/>
</dbReference>
<dbReference type="PANTHER" id="PTHR45806">
    <property type="entry name" value="SYNAPTOBREVIN HOMOLOG YKT6"/>
    <property type="match status" value="1"/>
</dbReference>
<dbReference type="PANTHER" id="PTHR45806:SF1">
    <property type="entry name" value="SYNAPTOBREVIN HOMOLOG YKT6"/>
    <property type="match status" value="1"/>
</dbReference>
<dbReference type="Pfam" id="PF13774">
    <property type="entry name" value="Longin"/>
    <property type="match status" value="1"/>
</dbReference>
<dbReference type="Pfam" id="PF00957">
    <property type="entry name" value="Synaptobrevin"/>
    <property type="match status" value="1"/>
</dbReference>
<dbReference type="SMART" id="SM01270">
    <property type="entry name" value="Longin"/>
    <property type="match status" value="1"/>
</dbReference>
<dbReference type="SUPFAM" id="SSF58038">
    <property type="entry name" value="SNARE fusion complex"/>
    <property type="match status" value="1"/>
</dbReference>
<dbReference type="SUPFAM" id="SSF64356">
    <property type="entry name" value="SNARE-like"/>
    <property type="match status" value="1"/>
</dbReference>
<dbReference type="PROSITE" id="PS50859">
    <property type="entry name" value="LONGIN"/>
    <property type="match status" value="1"/>
</dbReference>
<dbReference type="PROSITE" id="PS00417">
    <property type="entry name" value="SYNAPTOBREVIN"/>
    <property type="match status" value="1"/>
</dbReference>
<dbReference type="PROSITE" id="PS50892">
    <property type="entry name" value="V_SNARE"/>
    <property type="match status" value="1"/>
</dbReference>
<name>YKT61_ARATH</name>
<evidence type="ECO:0000250" key="1">
    <source>
        <dbReference type="UniProtKB" id="O15498"/>
    </source>
</evidence>
<evidence type="ECO:0000255" key="2">
    <source>
        <dbReference type="PROSITE-ProRule" id="PRU00231"/>
    </source>
</evidence>
<evidence type="ECO:0000255" key="3">
    <source>
        <dbReference type="PROSITE-ProRule" id="PRU00290"/>
    </source>
</evidence>
<evidence type="ECO:0000269" key="4">
    <source>
    </source>
</evidence>
<evidence type="ECO:0000269" key="5">
    <source>
    </source>
</evidence>
<evidence type="ECO:0000303" key="6">
    <source>
    </source>
</evidence>
<evidence type="ECO:0000303" key="7">
    <source ref="1"/>
</evidence>
<evidence type="ECO:0000305" key="8"/>
<evidence type="ECO:0000312" key="9">
    <source>
        <dbReference type="Araport" id="AT5G58060"/>
    </source>
</evidence>
<evidence type="ECO:0000312" key="10">
    <source>
        <dbReference type="EMBL" id="BAB10997.1"/>
    </source>
</evidence>
<feature type="chain" id="PRO_0000206748" description="VAMP-like protein YKT61">
    <location>
        <begin position="1"/>
        <end position="196"/>
    </location>
</feature>
<feature type="propeptide" id="PRO_0000370846" description="Removed in mature form" evidence="1">
    <location>
        <begin position="197"/>
        <end position="199"/>
    </location>
</feature>
<feature type="domain" description="Longin" evidence="2">
    <location>
        <begin position="7"/>
        <end position="133"/>
    </location>
</feature>
<feature type="domain" description="v-SNARE coiled-coil homology" evidence="3">
    <location>
        <begin position="139"/>
        <end position="199"/>
    </location>
</feature>
<feature type="modified residue" description="Cysteine methyl ester" evidence="1">
    <location>
        <position position="196"/>
    </location>
</feature>
<feature type="lipid moiety-binding region" description="S-palmitoyl cysteine" evidence="1">
    <location>
        <position position="195"/>
    </location>
</feature>
<feature type="lipid moiety-binding region" description="S-geranylgeranyl cysteine" evidence="1">
    <location>
        <position position="196"/>
    </location>
</feature>